<protein>
    <recommendedName>
        <fullName evidence="1">Glutamyl-tRNA(Gln) amidotransferase subunit D</fullName>
        <shortName evidence="1">Glu-ADT subunit D</shortName>
        <ecNumber evidence="1">6.3.5.-</ecNumber>
    </recommendedName>
</protein>
<proteinExistence type="inferred from homology"/>
<feature type="chain" id="PRO_1000212154" description="Glutamyl-tRNA(Gln) amidotransferase subunit D">
    <location>
        <begin position="1"/>
        <end position="445"/>
    </location>
</feature>
<feature type="domain" description="Asparaginase/glutaminase" evidence="2">
    <location>
        <begin position="93"/>
        <end position="425"/>
    </location>
</feature>
<feature type="active site" evidence="1">
    <location>
        <position position="103"/>
    </location>
</feature>
<feature type="active site" evidence="1">
    <location>
        <position position="179"/>
    </location>
</feature>
<feature type="active site" evidence="1">
    <location>
        <position position="180"/>
    </location>
</feature>
<feature type="active site" evidence="1">
    <location>
        <position position="258"/>
    </location>
</feature>
<keyword id="KW-0067">ATP-binding</keyword>
<keyword id="KW-0436">Ligase</keyword>
<keyword id="KW-0547">Nucleotide-binding</keyword>
<keyword id="KW-0648">Protein biosynthesis</keyword>
<name>GATD_SACI7</name>
<comment type="function">
    <text evidence="1">Allows the formation of correctly charged Gln-tRNA(Gln) through the transamidation of misacylated Glu-tRNA(Gln) in organisms which lack glutaminyl-tRNA synthetase. The reaction takes place in the presence of glutamine and ATP through an activated gamma-phospho-Glu-tRNA(Gln). The GatDE system is specific for glutamate and does not act on aspartate.</text>
</comment>
<comment type="catalytic activity">
    <reaction evidence="1">
        <text>L-glutamyl-tRNA(Gln) + L-glutamine + ATP + H2O = L-glutaminyl-tRNA(Gln) + L-glutamate + ADP + phosphate + H(+)</text>
        <dbReference type="Rhea" id="RHEA:17521"/>
        <dbReference type="Rhea" id="RHEA-COMP:9681"/>
        <dbReference type="Rhea" id="RHEA-COMP:9684"/>
        <dbReference type="ChEBI" id="CHEBI:15377"/>
        <dbReference type="ChEBI" id="CHEBI:15378"/>
        <dbReference type="ChEBI" id="CHEBI:29985"/>
        <dbReference type="ChEBI" id="CHEBI:30616"/>
        <dbReference type="ChEBI" id="CHEBI:43474"/>
        <dbReference type="ChEBI" id="CHEBI:58359"/>
        <dbReference type="ChEBI" id="CHEBI:78520"/>
        <dbReference type="ChEBI" id="CHEBI:78521"/>
        <dbReference type="ChEBI" id="CHEBI:456216"/>
    </reaction>
</comment>
<comment type="subunit">
    <text evidence="1">Heterodimer of GatD and GatE.</text>
</comment>
<comment type="similarity">
    <text evidence="1">Belongs to the asparaginase 1 family. GatD subfamily.</text>
</comment>
<gene>
    <name evidence="1" type="primary">gatD</name>
    <name type="ordered locus">YG5714_1274</name>
</gene>
<sequence>MQENYKAKAYDILKNLNIEEGDLIEIKKGDLRIRGILLPSYSKDERIFVIKLDNGYNIGISIDNISEIKLITKNSSKAQESERKEVSRNGAKSEIKIISTGGTIVSKVEYETGAVRPALTTEEIVQFLPEINEIAKVDAEVLFSILSENMKPEYWVKIAESVKKAFDEGNTGVVIAHGTDTMAYTASALAFSLRSLQGPVVLVGSQRSSDRPSSDSAINLLSAVTTAKYAPFGEVVVNMHADSSDTYALVHRGVKVRKMHSSRRDAFQSVNDKPLAKVLWKERKLVMLDKSYMSKKGETTLDAKFDNRAFLLYYYPGLDRDFLEHILTNTKIRGLIIAGTGLGHTSSDYVELFRKATKDGIFIGMTTQCLFGRVNMNVYTTGRQLLDAGVTPLEDMLPEVALVKLMWVLAHEQDLEKIRSLMISNLVGEINPRHTLDLFPRWSYE</sequence>
<dbReference type="EC" id="6.3.5.-" evidence="1"/>
<dbReference type="EMBL" id="CP001403">
    <property type="protein sequence ID" value="ACP45540.1"/>
    <property type="molecule type" value="Genomic_DNA"/>
</dbReference>
<dbReference type="RefSeq" id="WP_012711295.1">
    <property type="nucleotide sequence ID" value="NC_012622.1"/>
</dbReference>
<dbReference type="SMR" id="C3NE01"/>
<dbReference type="GeneID" id="84061603"/>
<dbReference type="KEGG" id="siy:YG5714_1274"/>
<dbReference type="HOGENOM" id="CLU_019134_2_1_2"/>
<dbReference type="Proteomes" id="UP000002308">
    <property type="component" value="Chromosome"/>
</dbReference>
<dbReference type="GO" id="GO:0004067">
    <property type="term" value="F:asparaginase activity"/>
    <property type="evidence" value="ECO:0007669"/>
    <property type="project" value="InterPro"/>
</dbReference>
<dbReference type="GO" id="GO:0005524">
    <property type="term" value="F:ATP binding"/>
    <property type="evidence" value="ECO:0007669"/>
    <property type="project" value="UniProtKB-KW"/>
</dbReference>
<dbReference type="GO" id="GO:0050567">
    <property type="term" value="F:glutaminyl-tRNA synthase (glutamine-hydrolyzing) activity"/>
    <property type="evidence" value="ECO:0007669"/>
    <property type="project" value="UniProtKB-UniRule"/>
</dbReference>
<dbReference type="GO" id="GO:0006520">
    <property type="term" value="P:amino acid metabolic process"/>
    <property type="evidence" value="ECO:0007669"/>
    <property type="project" value="InterPro"/>
</dbReference>
<dbReference type="GO" id="GO:0006450">
    <property type="term" value="P:regulation of translational fidelity"/>
    <property type="evidence" value="ECO:0007669"/>
    <property type="project" value="InterPro"/>
</dbReference>
<dbReference type="GO" id="GO:0006412">
    <property type="term" value="P:translation"/>
    <property type="evidence" value="ECO:0007669"/>
    <property type="project" value="UniProtKB-UniRule"/>
</dbReference>
<dbReference type="CDD" id="cd08962">
    <property type="entry name" value="GatD"/>
    <property type="match status" value="1"/>
</dbReference>
<dbReference type="Gene3D" id="2.30.30.520">
    <property type="match status" value="1"/>
</dbReference>
<dbReference type="Gene3D" id="3.40.50.40">
    <property type="match status" value="1"/>
</dbReference>
<dbReference type="Gene3D" id="3.40.50.1170">
    <property type="entry name" value="L-asparaginase, N-terminal domain"/>
    <property type="match status" value="1"/>
</dbReference>
<dbReference type="HAMAP" id="MF_00586">
    <property type="entry name" value="GatD"/>
    <property type="match status" value="1"/>
</dbReference>
<dbReference type="InterPro" id="IPR006033">
    <property type="entry name" value="AsnA_fam"/>
</dbReference>
<dbReference type="InterPro" id="IPR036152">
    <property type="entry name" value="Asp/glu_Ase-like_sf"/>
</dbReference>
<dbReference type="InterPro" id="IPR006034">
    <property type="entry name" value="Asparaginase/glutaminase-like"/>
</dbReference>
<dbReference type="InterPro" id="IPR027475">
    <property type="entry name" value="Asparaginase/glutaminase_AS2"/>
</dbReference>
<dbReference type="InterPro" id="IPR040919">
    <property type="entry name" value="Asparaginase_C"/>
</dbReference>
<dbReference type="InterPro" id="IPR011878">
    <property type="entry name" value="GatD"/>
</dbReference>
<dbReference type="InterPro" id="IPR040918">
    <property type="entry name" value="GatD_N"/>
</dbReference>
<dbReference type="InterPro" id="IPR037222">
    <property type="entry name" value="GatD_N_sf"/>
</dbReference>
<dbReference type="InterPro" id="IPR027473">
    <property type="entry name" value="L-asparaginase_C"/>
</dbReference>
<dbReference type="InterPro" id="IPR027474">
    <property type="entry name" value="L-asparaginase_N"/>
</dbReference>
<dbReference type="InterPro" id="IPR037152">
    <property type="entry name" value="L-asparaginase_N_sf"/>
</dbReference>
<dbReference type="NCBIfam" id="TIGR00519">
    <property type="entry name" value="asnASE_I"/>
    <property type="match status" value="1"/>
</dbReference>
<dbReference type="NCBIfam" id="TIGR02153">
    <property type="entry name" value="gatD_arch"/>
    <property type="match status" value="1"/>
</dbReference>
<dbReference type="NCBIfam" id="NF003217">
    <property type="entry name" value="PRK04183.1"/>
    <property type="match status" value="1"/>
</dbReference>
<dbReference type="PANTHER" id="PTHR11707:SF28">
    <property type="entry name" value="60 KDA LYSOPHOSPHOLIPASE"/>
    <property type="match status" value="1"/>
</dbReference>
<dbReference type="PANTHER" id="PTHR11707">
    <property type="entry name" value="L-ASPARAGINASE"/>
    <property type="match status" value="1"/>
</dbReference>
<dbReference type="Pfam" id="PF00710">
    <property type="entry name" value="Asparaginase"/>
    <property type="match status" value="1"/>
</dbReference>
<dbReference type="Pfam" id="PF17763">
    <property type="entry name" value="Asparaginase_C"/>
    <property type="match status" value="1"/>
</dbReference>
<dbReference type="Pfam" id="PF18195">
    <property type="entry name" value="GatD_N"/>
    <property type="match status" value="1"/>
</dbReference>
<dbReference type="PIRSF" id="PIRSF500175">
    <property type="entry name" value="Glu_ADT_D"/>
    <property type="match status" value="1"/>
</dbReference>
<dbReference type="PIRSF" id="PIRSF001220">
    <property type="entry name" value="L-ASNase_gatD"/>
    <property type="match status" value="1"/>
</dbReference>
<dbReference type="PRINTS" id="PR00139">
    <property type="entry name" value="ASNGLNASE"/>
</dbReference>
<dbReference type="SMART" id="SM00870">
    <property type="entry name" value="Asparaginase"/>
    <property type="match status" value="1"/>
</dbReference>
<dbReference type="SUPFAM" id="SSF141300">
    <property type="entry name" value="GatD N-terminal domain-like"/>
    <property type="match status" value="1"/>
</dbReference>
<dbReference type="SUPFAM" id="SSF53774">
    <property type="entry name" value="Glutaminase/Asparaginase"/>
    <property type="match status" value="1"/>
</dbReference>
<dbReference type="PROSITE" id="PS00917">
    <property type="entry name" value="ASN_GLN_ASE_2"/>
    <property type="match status" value="1"/>
</dbReference>
<dbReference type="PROSITE" id="PS51732">
    <property type="entry name" value="ASN_GLN_ASE_3"/>
    <property type="match status" value="1"/>
</dbReference>
<reference key="1">
    <citation type="journal article" date="2009" name="Proc. Natl. Acad. Sci. U.S.A.">
        <title>Biogeography of the Sulfolobus islandicus pan-genome.</title>
        <authorList>
            <person name="Reno M.L."/>
            <person name="Held N.L."/>
            <person name="Fields C.J."/>
            <person name="Burke P.V."/>
            <person name="Whitaker R.J."/>
        </authorList>
    </citation>
    <scope>NUCLEOTIDE SEQUENCE [LARGE SCALE GENOMIC DNA]</scope>
    <source>
        <strain>Y.G.57.14 / Yellowstone #1</strain>
    </source>
</reference>
<evidence type="ECO:0000255" key="1">
    <source>
        <dbReference type="HAMAP-Rule" id="MF_00586"/>
    </source>
</evidence>
<evidence type="ECO:0000255" key="2">
    <source>
        <dbReference type="PROSITE-ProRule" id="PRU01068"/>
    </source>
</evidence>
<organism>
    <name type="scientific">Saccharolobus islandicus (strain Y.G.57.14 / Yellowstone #1)</name>
    <name type="common">Sulfolobus islandicus</name>
    <dbReference type="NCBI Taxonomy" id="439386"/>
    <lineage>
        <taxon>Archaea</taxon>
        <taxon>Thermoproteota</taxon>
        <taxon>Thermoprotei</taxon>
        <taxon>Sulfolobales</taxon>
        <taxon>Sulfolobaceae</taxon>
        <taxon>Saccharolobus</taxon>
    </lineage>
</organism>
<accession>C3NE01</accession>